<dbReference type="EMBL" id="AAFI02000161">
    <property type="protein sequence ID" value="EAL62340.1"/>
    <property type="molecule type" value="Genomic_DNA"/>
</dbReference>
<dbReference type="RefSeq" id="XP_635850.1">
    <property type="nucleotide sequence ID" value="XM_630758.1"/>
</dbReference>
<dbReference type="SMR" id="Q54GC8"/>
<dbReference type="FunCoup" id="Q54GC8">
    <property type="interactions" value="185"/>
</dbReference>
<dbReference type="STRING" id="44689.Q54GC8"/>
<dbReference type="PaxDb" id="44689-DDB0266382"/>
<dbReference type="EnsemblProtists" id="EAL62340">
    <property type="protein sequence ID" value="EAL62340"/>
    <property type="gene ID" value="DDB_G0290237"/>
</dbReference>
<dbReference type="GeneID" id="8627558"/>
<dbReference type="KEGG" id="ddi:DDB_G0290237"/>
<dbReference type="dictyBase" id="DDB_G0290237">
    <property type="gene designation" value="acbd6"/>
</dbReference>
<dbReference type="VEuPathDB" id="AmoebaDB:DDB_G0290237"/>
<dbReference type="eggNOG" id="KOG0817">
    <property type="taxonomic scope" value="Eukaryota"/>
</dbReference>
<dbReference type="HOGENOM" id="CLU_050309_1_0_1"/>
<dbReference type="InParanoid" id="Q54GC8"/>
<dbReference type="OMA" id="ARSKWQA"/>
<dbReference type="PhylomeDB" id="Q54GC8"/>
<dbReference type="Reactome" id="R-DDI-77289">
    <property type="pathway name" value="Mitochondrial Fatty Acid Beta-Oxidation"/>
</dbReference>
<dbReference type="PRO" id="PR:Q54GC8"/>
<dbReference type="Proteomes" id="UP000002195">
    <property type="component" value="Chromosome 5"/>
</dbReference>
<dbReference type="GO" id="GO:0005737">
    <property type="term" value="C:cytoplasm"/>
    <property type="evidence" value="ECO:0007669"/>
    <property type="project" value="UniProtKB-SubCell"/>
</dbReference>
<dbReference type="GO" id="GO:0000062">
    <property type="term" value="F:fatty-acyl-CoA binding"/>
    <property type="evidence" value="ECO:0000318"/>
    <property type="project" value="GO_Central"/>
</dbReference>
<dbReference type="Gene3D" id="1.20.80.10">
    <property type="match status" value="1"/>
</dbReference>
<dbReference type="Gene3D" id="1.25.40.20">
    <property type="entry name" value="Ankyrin repeat-containing domain"/>
    <property type="match status" value="1"/>
</dbReference>
<dbReference type="InterPro" id="IPR000582">
    <property type="entry name" value="Acyl-CoA-binding_protein"/>
</dbReference>
<dbReference type="InterPro" id="IPR035984">
    <property type="entry name" value="Acyl-CoA-binding_sf"/>
</dbReference>
<dbReference type="InterPro" id="IPR002110">
    <property type="entry name" value="Ankyrin_rpt"/>
</dbReference>
<dbReference type="InterPro" id="IPR036770">
    <property type="entry name" value="Ankyrin_rpt-contain_sf"/>
</dbReference>
<dbReference type="InterPro" id="IPR014352">
    <property type="entry name" value="FERM/acyl-CoA-bd_prot_sf"/>
</dbReference>
<dbReference type="PANTHER" id="PTHR24119">
    <property type="entry name" value="ACYL-COA-BINDING DOMAIN-CONTAINING PROTEIN 6"/>
    <property type="match status" value="1"/>
</dbReference>
<dbReference type="PANTHER" id="PTHR24119:SF0">
    <property type="entry name" value="ACYL-COA-BINDING DOMAIN-CONTAINING PROTEIN 6"/>
    <property type="match status" value="1"/>
</dbReference>
<dbReference type="Pfam" id="PF00887">
    <property type="entry name" value="ACBP"/>
    <property type="match status" value="1"/>
</dbReference>
<dbReference type="Pfam" id="PF12796">
    <property type="entry name" value="Ank_2"/>
    <property type="match status" value="1"/>
</dbReference>
<dbReference type="PRINTS" id="PR00689">
    <property type="entry name" value="ACOABINDINGP"/>
</dbReference>
<dbReference type="SMART" id="SM00248">
    <property type="entry name" value="ANK"/>
    <property type="match status" value="2"/>
</dbReference>
<dbReference type="SUPFAM" id="SSF47027">
    <property type="entry name" value="Acyl-CoA binding protein"/>
    <property type="match status" value="1"/>
</dbReference>
<dbReference type="SUPFAM" id="SSF48403">
    <property type="entry name" value="Ankyrin repeat"/>
    <property type="match status" value="1"/>
</dbReference>
<dbReference type="PROSITE" id="PS51228">
    <property type="entry name" value="ACB_2"/>
    <property type="match status" value="1"/>
</dbReference>
<dbReference type="PROSITE" id="PS50297">
    <property type="entry name" value="ANK_REP_REGION"/>
    <property type="match status" value="1"/>
</dbReference>
<dbReference type="PROSITE" id="PS50088">
    <property type="entry name" value="ANK_REPEAT"/>
    <property type="match status" value="2"/>
</dbReference>
<feature type="chain" id="PRO_0000328232" description="Acyl-CoA-binding domain-containing protein 6 homolog">
    <location>
        <begin position="1"/>
        <end position="288"/>
    </location>
</feature>
<feature type="domain" description="ACB" evidence="3">
    <location>
        <begin position="6"/>
        <end position="94"/>
    </location>
</feature>
<feature type="repeat" description="ANK 1">
    <location>
        <begin position="200"/>
        <end position="229"/>
    </location>
</feature>
<feature type="repeat" description="ANK 2">
    <location>
        <begin position="233"/>
        <end position="263"/>
    </location>
</feature>
<feature type="binding site" evidence="1">
    <location>
        <begin position="36"/>
        <end position="40"/>
    </location>
    <ligand>
        <name>an acyl-CoA</name>
        <dbReference type="ChEBI" id="CHEBI:58342"/>
    </ligand>
</feature>
<feature type="binding site" evidence="1">
    <location>
        <position position="62"/>
    </location>
    <ligand>
        <name>an acyl-CoA</name>
        <dbReference type="ChEBI" id="CHEBI:58342"/>
    </ligand>
</feature>
<feature type="binding site" evidence="1">
    <location>
        <position position="81"/>
    </location>
    <ligand>
        <name>an acyl-CoA</name>
        <dbReference type="ChEBI" id="CHEBI:58342"/>
    </ligand>
</feature>
<organism>
    <name type="scientific">Dictyostelium discoideum</name>
    <name type="common">Social amoeba</name>
    <dbReference type="NCBI Taxonomy" id="44689"/>
    <lineage>
        <taxon>Eukaryota</taxon>
        <taxon>Amoebozoa</taxon>
        <taxon>Evosea</taxon>
        <taxon>Eumycetozoa</taxon>
        <taxon>Dictyostelia</taxon>
        <taxon>Dictyosteliales</taxon>
        <taxon>Dictyosteliaceae</taxon>
        <taxon>Dictyostelium</taxon>
    </lineage>
</organism>
<proteinExistence type="inferred from homology"/>
<comment type="function">
    <text evidence="2">Binds long-chain acyl-coenzyme A molecules with a strong preference for unsaturated C18:1-CoA. Does not bind fatty acids (By similarity). Plays a role in protein N-myristoylation (By similarity).</text>
</comment>
<comment type="subcellular location">
    <subcellularLocation>
        <location evidence="2">Cytoplasm</location>
    </subcellularLocation>
</comment>
<gene>
    <name type="primary">acbd6</name>
    <name type="ORF">DDB_G0290237</name>
</gene>
<protein>
    <recommendedName>
        <fullName>Acyl-CoA-binding domain-containing protein 6 homolog</fullName>
    </recommendedName>
</protein>
<name>ACBD6_DICDI</name>
<sequence>MTDAQIENKFKLAVDYITNNSGKLSNIKNEEQLYLYCNYKQATIGDCNTKAPPFYDYIGKSKWNSWNSLKGVEKIVAMNSYISLVNALSPGWDSNIKVERATQSVFLNDEEFKELEKKEKEEKEELKKLEEENGGEIEKPKSKWMGPVLSKFSLVDDETLEKLEKNTKQDLGYWVSVNDIERVKKEIENDKNIINEVDEDGRTALIWACDRGYFEIAKLLIENGSNVNVQDGEGMTPLHYAVVCDQFEICKLLLSQSSIDKSIKDNSDSIPSDFIDSSTSENIKSLFK</sequence>
<evidence type="ECO:0000250" key="1"/>
<evidence type="ECO:0000250" key="2">
    <source>
        <dbReference type="UniProtKB" id="Q9BR61"/>
    </source>
</evidence>
<evidence type="ECO:0000255" key="3">
    <source>
        <dbReference type="PROSITE-ProRule" id="PRU00573"/>
    </source>
</evidence>
<keyword id="KW-0040">ANK repeat</keyword>
<keyword id="KW-0963">Cytoplasm</keyword>
<keyword id="KW-0446">Lipid-binding</keyword>
<keyword id="KW-1185">Reference proteome</keyword>
<keyword id="KW-0677">Repeat</keyword>
<reference key="1">
    <citation type="journal article" date="2005" name="Nature">
        <title>The genome of the social amoeba Dictyostelium discoideum.</title>
        <authorList>
            <person name="Eichinger L."/>
            <person name="Pachebat J.A."/>
            <person name="Gloeckner G."/>
            <person name="Rajandream M.A."/>
            <person name="Sucgang R."/>
            <person name="Berriman M."/>
            <person name="Song J."/>
            <person name="Olsen R."/>
            <person name="Szafranski K."/>
            <person name="Xu Q."/>
            <person name="Tunggal B."/>
            <person name="Kummerfeld S."/>
            <person name="Madera M."/>
            <person name="Konfortov B.A."/>
            <person name="Rivero F."/>
            <person name="Bankier A.T."/>
            <person name="Lehmann R."/>
            <person name="Hamlin N."/>
            <person name="Davies R."/>
            <person name="Gaudet P."/>
            <person name="Fey P."/>
            <person name="Pilcher K."/>
            <person name="Chen G."/>
            <person name="Saunders D."/>
            <person name="Sodergren E.J."/>
            <person name="Davis P."/>
            <person name="Kerhornou A."/>
            <person name="Nie X."/>
            <person name="Hall N."/>
            <person name="Anjard C."/>
            <person name="Hemphill L."/>
            <person name="Bason N."/>
            <person name="Farbrother P."/>
            <person name="Desany B."/>
            <person name="Just E."/>
            <person name="Morio T."/>
            <person name="Rost R."/>
            <person name="Churcher C.M."/>
            <person name="Cooper J."/>
            <person name="Haydock S."/>
            <person name="van Driessche N."/>
            <person name="Cronin A."/>
            <person name="Goodhead I."/>
            <person name="Muzny D.M."/>
            <person name="Mourier T."/>
            <person name="Pain A."/>
            <person name="Lu M."/>
            <person name="Harper D."/>
            <person name="Lindsay R."/>
            <person name="Hauser H."/>
            <person name="James K.D."/>
            <person name="Quiles M."/>
            <person name="Madan Babu M."/>
            <person name="Saito T."/>
            <person name="Buchrieser C."/>
            <person name="Wardroper A."/>
            <person name="Felder M."/>
            <person name="Thangavelu M."/>
            <person name="Johnson D."/>
            <person name="Knights A."/>
            <person name="Loulseged H."/>
            <person name="Mungall K.L."/>
            <person name="Oliver K."/>
            <person name="Price C."/>
            <person name="Quail M.A."/>
            <person name="Urushihara H."/>
            <person name="Hernandez J."/>
            <person name="Rabbinowitsch E."/>
            <person name="Steffen D."/>
            <person name="Sanders M."/>
            <person name="Ma J."/>
            <person name="Kohara Y."/>
            <person name="Sharp S."/>
            <person name="Simmonds M.N."/>
            <person name="Spiegler S."/>
            <person name="Tivey A."/>
            <person name="Sugano S."/>
            <person name="White B."/>
            <person name="Walker D."/>
            <person name="Woodward J.R."/>
            <person name="Winckler T."/>
            <person name="Tanaka Y."/>
            <person name="Shaulsky G."/>
            <person name="Schleicher M."/>
            <person name="Weinstock G.M."/>
            <person name="Rosenthal A."/>
            <person name="Cox E.C."/>
            <person name="Chisholm R.L."/>
            <person name="Gibbs R.A."/>
            <person name="Loomis W.F."/>
            <person name="Platzer M."/>
            <person name="Kay R.R."/>
            <person name="Williams J.G."/>
            <person name="Dear P.H."/>
            <person name="Noegel A.A."/>
            <person name="Barrell B.G."/>
            <person name="Kuspa A."/>
        </authorList>
    </citation>
    <scope>NUCLEOTIDE SEQUENCE [LARGE SCALE GENOMIC DNA]</scope>
    <source>
        <strain>AX4</strain>
    </source>
</reference>
<accession>Q54GC8</accession>